<dbReference type="EC" id="7.2.1.1" evidence="1 5"/>
<dbReference type="EMBL" id="Z37111">
    <property type="protein sequence ID" value="CAA85477.1"/>
    <property type="status" value="ALT_INIT"/>
    <property type="molecule type" value="Genomic_DNA"/>
</dbReference>
<dbReference type="EMBL" id="AB008030">
    <property type="protein sequence ID" value="BAA22911.1"/>
    <property type="molecule type" value="Genomic_DNA"/>
</dbReference>
<dbReference type="PIR" id="S51016">
    <property type="entry name" value="S51016"/>
</dbReference>
<dbReference type="RefSeq" id="WP_006742551.1">
    <property type="nucleotide sequence ID" value="NZ_JBBLMY010000003.1"/>
</dbReference>
<dbReference type="SMR" id="Q56587"/>
<dbReference type="STRING" id="663.BAU10_10835"/>
<dbReference type="TCDB" id="3.D.5.1.1">
    <property type="family name" value="the na(+)-translocating nadh:quinone dehydrogenase (na-ndh or nqr) family"/>
</dbReference>
<dbReference type="eggNOG" id="COG1805">
    <property type="taxonomic scope" value="Bacteria"/>
</dbReference>
<dbReference type="GO" id="GO:0005886">
    <property type="term" value="C:plasma membrane"/>
    <property type="evidence" value="ECO:0007669"/>
    <property type="project" value="UniProtKB-SubCell"/>
</dbReference>
<dbReference type="GO" id="GO:0010181">
    <property type="term" value="F:FMN binding"/>
    <property type="evidence" value="ECO:0000314"/>
    <property type="project" value="UniProtKB"/>
</dbReference>
<dbReference type="GO" id="GO:0016655">
    <property type="term" value="F:oxidoreductase activity, acting on NAD(P)H, quinone or similar compound as acceptor"/>
    <property type="evidence" value="ECO:0000314"/>
    <property type="project" value="UniProtKB"/>
</dbReference>
<dbReference type="GO" id="GO:0022904">
    <property type="term" value="P:respiratory electron transport chain"/>
    <property type="evidence" value="ECO:0007669"/>
    <property type="project" value="InterPro"/>
</dbReference>
<dbReference type="GO" id="GO:0006814">
    <property type="term" value="P:sodium ion transport"/>
    <property type="evidence" value="ECO:0007669"/>
    <property type="project" value="UniProtKB-UniRule"/>
</dbReference>
<dbReference type="GO" id="GO:0055085">
    <property type="term" value="P:transmembrane transport"/>
    <property type="evidence" value="ECO:0007669"/>
    <property type="project" value="InterPro"/>
</dbReference>
<dbReference type="HAMAP" id="MF_00426">
    <property type="entry name" value="NqrB"/>
    <property type="match status" value="1"/>
</dbReference>
<dbReference type="InterPro" id="IPR010966">
    <property type="entry name" value="NqrB"/>
</dbReference>
<dbReference type="InterPro" id="IPR004338">
    <property type="entry name" value="NqrB/RnfD"/>
</dbReference>
<dbReference type="NCBIfam" id="TIGR01937">
    <property type="entry name" value="nqrB"/>
    <property type="match status" value="1"/>
</dbReference>
<dbReference type="NCBIfam" id="NF003756">
    <property type="entry name" value="PRK05349.1"/>
    <property type="match status" value="1"/>
</dbReference>
<dbReference type="PANTHER" id="PTHR30578">
    <property type="entry name" value="ELECTRON TRANSPORT COMPLEX PROTEIN RNFD"/>
    <property type="match status" value="1"/>
</dbReference>
<dbReference type="PANTHER" id="PTHR30578:SF1">
    <property type="entry name" value="NA(+)-TRANSLOCATING NADH-QUINONE REDUCTASE SUBUNIT B"/>
    <property type="match status" value="1"/>
</dbReference>
<dbReference type="Pfam" id="PF03116">
    <property type="entry name" value="NQR2_RnfD_RnfE"/>
    <property type="match status" value="1"/>
</dbReference>
<dbReference type="PIRSF" id="PIRSF016055">
    <property type="entry name" value="NADH-UbQ_OxRdtase_B_su"/>
    <property type="match status" value="1"/>
</dbReference>
<accession>Q56587</accession>
<gene>
    <name evidence="1 6" type="primary">nqrB</name>
    <name evidence="7" type="synonym">nqr2</name>
</gene>
<keyword id="KW-0997">Cell inner membrane</keyword>
<keyword id="KW-1003">Cell membrane</keyword>
<keyword id="KW-0903">Direct protein sequencing</keyword>
<keyword id="KW-0285">Flavoprotein</keyword>
<keyword id="KW-0288">FMN</keyword>
<keyword id="KW-0406">Ion transport</keyword>
<keyword id="KW-0472">Membrane</keyword>
<keyword id="KW-0520">NAD</keyword>
<keyword id="KW-0597">Phosphoprotein</keyword>
<keyword id="KW-0915">Sodium</keyword>
<keyword id="KW-0739">Sodium transport</keyword>
<keyword id="KW-1278">Translocase</keyword>
<keyword id="KW-0812">Transmembrane</keyword>
<keyword id="KW-1133">Transmembrane helix</keyword>
<keyword id="KW-0813">Transport</keyword>
<keyword id="KW-0830">Ubiquinone</keyword>
<proteinExistence type="evidence at protein level"/>
<evidence type="ECO:0000255" key="1">
    <source>
        <dbReference type="HAMAP-Rule" id="MF_00426"/>
    </source>
</evidence>
<evidence type="ECO:0000269" key="2">
    <source>
    </source>
</evidence>
<evidence type="ECO:0000269" key="3">
    <source>
    </source>
</evidence>
<evidence type="ECO:0000269" key="4">
    <source>
    </source>
</evidence>
<evidence type="ECO:0000269" key="5">
    <source>
    </source>
</evidence>
<evidence type="ECO:0000303" key="6">
    <source>
    </source>
</evidence>
<evidence type="ECO:0000303" key="7">
    <source>
    </source>
</evidence>
<evidence type="ECO:0000305" key="8"/>
<evidence type="ECO:0000305" key="9">
    <source>
    </source>
</evidence>
<evidence type="ECO:0000305" key="10">
    <source>
    </source>
</evidence>
<protein>
    <recommendedName>
        <fullName evidence="1 7">Na(+)-translocating NADH-quinone reductase subunit B</fullName>
        <shortName evidence="1">Na(+)-NQR subunit B</shortName>
        <shortName evidence="1">Na(+)-translocating NQR subunit B</shortName>
        <ecNumber evidence="1 5">7.2.1.1</ecNumber>
    </recommendedName>
    <alternativeName>
        <fullName evidence="1">NQR complex subunit B</fullName>
    </alternativeName>
    <alternativeName>
        <fullName evidence="1">NQR-1 subunit B</fullName>
    </alternativeName>
</protein>
<comment type="function">
    <text evidence="1 9 10">NQR complex catalyzes the reduction of ubiquinone-1 to ubiquinol by two successive reactions, coupled with the transport of Na(+) ions from the cytoplasm to the periplasm. NqrA to NqrE are probably involved in the second step, the conversion of ubisemiquinone to ubiquinol.</text>
</comment>
<comment type="catalytic activity">
    <reaction evidence="1 5">
        <text>a ubiquinone + n Na(+)(in) + NADH + H(+) = a ubiquinol + n Na(+)(out) + NAD(+)</text>
        <dbReference type="Rhea" id="RHEA:47748"/>
        <dbReference type="Rhea" id="RHEA-COMP:9565"/>
        <dbReference type="Rhea" id="RHEA-COMP:9566"/>
        <dbReference type="ChEBI" id="CHEBI:15378"/>
        <dbReference type="ChEBI" id="CHEBI:16389"/>
        <dbReference type="ChEBI" id="CHEBI:17976"/>
        <dbReference type="ChEBI" id="CHEBI:29101"/>
        <dbReference type="ChEBI" id="CHEBI:57540"/>
        <dbReference type="ChEBI" id="CHEBI:57945"/>
        <dbReference type="EC" id="7.2.1.1"/>
    </reaction>
</comment>
<comment type="cofactor">
    <cofactor evidence="1 3 4">
        <name>FMN</name>
        <dbReference type="ChEBI" id="CHEBI:58210"/>
    </cofactor>
</comment>
<comment type="activity regulation">
    <text evidence="2">This reaction is tightly coupled to the Na(+) pumping activity and specifically requires Na(+) for activity. Inhibited by korormicin and 2-N-heptyl-4-hydroxyquinoline N-oxide (HQNO).</text>
</comment>
<comment type="subunit">
    <text evidence="1 5">Composed of six subunits; NqrA, NqrB, NqrC, NqrD, NqrE and NqrF.</text>
</comment>
<comment type="subcellular location">
    <subcellularLocation>
        <location evidence="1 8">Cell inner membrane</location>
        <topology evidence="1">Multi-pass membrane protein</topology>
    </subcellularLocation>
</comment>
<comment type="similarity">
    <text evidence="1 8">Belongs to the NqrB/RnfD family.</text>
</comment>
<comment type="sequence caution" evidence="8">
    <conflict type="erroneous initiation">
        <sequence resource="EMBL-CDS" id="CAA85477"/>
    </conflict>
</comment>
<name>NQRB_VIBAL</name>
<sequence>MALKKFLEDIEHHFEPGGKHEKWFALYEAVATVFYTPGIVTNKSSHVRDSVDLKRIMIMVWFAVFPAMFWGMYNAGGQAIAALNHMYAGDQLATVISGNWHYWLTEMLGGTIAADAGVGSKMLLGATYFLPIYATVFLVGGFWEVLFCMVRKHEVNEGFFVTSILFALIVPPTLPLWQAALGITFGVVVAKEIFGGTGRNFLNPALAGRAFLFFAYPAQISGDVVWTAADGFSGATALSQWAQGGNGALVNTVTGSPITWMDAFIGNIPGSIGEVSTLALMIGAAMIVYMRIASWRIIAGVMIGMIAVSTLFNVIGSDTNPMFNMPWHWHLVLGGFAFGMFFMATDPVSASFTNKGKWWYGILIGAMCVMIRVVNPAYPEGMMLAILFANLFAPLFDHVVIEKNIKRRLARYGK</sequence>
<organism>
    <name type="scientific">Vibrio alginolyticus</name>
    <dbReference type="NCBI Taxonomy" id="663"/>
    <lineage>
        <taxon>Bacteria</taxon>
        <taxon>Pseudomonadati</taxon>
        <taxon>Pseudomonadota</taxon>
        <taxon>Gammaproteobacteria</taxon>
        <taxon>Vibrionales</taxon>
        <taxon>Vibrionaceae</taxon>
        <taxon>Vibrio</taxon>
    </lineage>
</organism>
<feature type="initiator methionine" description="Removed" evidence="3 5">
    <location>
        <position position="1"/>
    </location>
</feature>
<feature type="chain" id="PRO_0000074442" description="Na(+)-translocating NADH-quinone reductase subunit B">
    <location>
        <begin position="2"/>
        <end position="414"/>
    </location>
</feature>
<feature type="transmembrane region" description="Helical" evidence="1">
    <location>
        <begin position="56"/>
        <end position="76"/>
    </location>
</feature>
<feature type="transmembrane region" description="Helical" evidence="1">
    <location>
        <begin position="129"/>
        <end position="149"/>
    </location>
</feature>
<feature type="transmembrane region" description="Helical" evidence="1">
    <location>
        <begin position="164"/>
        <end position="184"/>
    </location>
</feature>
<feature type="transmembrane region" description="Helical" evidence="1">
    <location>
        <begin position="268"/>
        <end position="288"/>
    </location>
</feature>
<feature type="transmembrane region" description="Helical" evidence="1">
    <location>
        <begin position="297"/>
        <end position="317"/>
    </location>
</feature>
<feature type="transmembrane region" description="Helical" evidence="1">
    <location>
        <begin position="325"/>
        <end position="345"/>
    </location>
</feature>
<feature type="transmembrane region" description="Helical" evidence="1">
    <location>
        <begin position="358"/>
        <end position="378"/>
    </location>
</feature>
<feature type="transmembrane region" description="Helical" evidence="1">
    <location>
        <begin position="381"/>
        <end position="401"/>
    </location>
</feature>
<feature type="modified residue" description="FMN phosphoryl threonine" evidence="1 4">
    <location>
        <position position="236"/>
    </location>
</feature>
<feature type="sequence conflict" description="In Ref. 1; CAA85477." evidence="8" ref="1">
    <original>A</original>
    <variation>V</variation>
    <location>
        <position position="229"/>
    </location>
</feature>
<feature type="sequence conflict" description="In Ref. 1; CAA85477." evidence="8" ref="1">
    <original>W</original>
    <variation>G</variation>
    <location>
        <position position="295"/>
    </location>
</feature>
<reference key="1">
    <citation type="journal article" date="1994" name="FEBS Lett.">
        <title>Cloning and sequencing of four structural genes for the Na(+)-translocating NADH-ubiquinone oxidoreductase of Vibrio alginolyticus.</title>
        <authorList>
            <person name="Beattie P."/>
            <person name="Tan K."/>
            <person name="Bourne R.M."/>
            <person name="Leach D.R.F."/>
            <person name="Rich P.R."/>
            <person name="Ward F.B."/>
        </authorList>
    </citation>
    <scope>NUCLEOTIDE SEQUENCE [GENOMIC DNA]</scope>
    <source>
        <strain>NCIMB 11038 / LMG 3418</strain>
    </source>
</reference>
<reference key="2">
    <citation type="submission" date="1997-10" db="EMBL/GenBank/DDBJ databases">
        <authorList>
            <person name="Hayashi M."/>
            <person name="Unemoto T."/>
            <person name="Sugiyama A."/>
        </authorList>
    </citation>
    <scope>NUCLEOTIDE SEQUENCE [GENOMIC DNA]</scope>
</reference>
<reference key="3">
    <citation type="journal article" date="1998" name="FEBS Lett.">
        <title>Identification of six subunits constituting Na+-translocating NADH-quinone reductase from the marine Vibrio alginolyticus.</title>
        <authorList>
            <person name="Nakayama Y."/>
            <person name="Hayashi M."/>
            <person name="Unemoto T."/>
        </authorList>
    </citation>
    <scope>PROTEIN SEQUENCE OF 2-11</scope>
    <scope>CATALYTIC ACTIVITY</scope>
    <scope>SUBUNIT</scope>
</reference>
<reference key="4">
    <citation type="journal article" date="2000" name="FEBS Lett.">
        <title>Covalently bound flavin in the NqrB and NqrC subunits of Na(+)-translocating NADH-quinone reductase from Vibrio alginolyticus.</title>
        <authorList>
            <person name="Nakayama Y."/>
            <person name="Yasui M."/>
            <person name="Sugahara K."/>
            <person name="Hayashi M."/>
            <person name="Unemoto T."/>
        </authorList>
    </citation>
    <scope>PROTEIN SEQUENCE OF 2-7 AND 227-238</scope>
    <scope>COFACTOR</scope>
</reference>
<reference key="5">
    <citation type="journal article" date="1999" name="Biol. Pharm. Bull.">
        <title>Inhibitor studies of a new antibiotic, korormicin, 2-n-heptyl-4-hydroxyquinoline N-oxide and Ag+ toward the Na+-translocating NADH-quinone reductase from the marine Vibrio alginolyticus.</title>
        <authorList>
            <person name="Nakayama Y."/>
            <person name="Hayashi M."/>
            <person name="Yoshikawa K."/>
            <person name="Mochida K."/>
            <person name="Unemoto T."/>
        </authorList>
    </citation>
    <scope>INHIBITION OF ENZYMATIC ACTIVITY</scope>
</reference>
<reference key="6">
    <citation type="journal article" date="2001" name="FEBS Lett.">
        <title>FMN is covalently attached to a threonine residue in the NqrB and NqrC subunits of Na(+)-translocating NADH-quinone reductase from Vibrio alginolyticus.</title>
        <authorList>
            <person name="Hayashi M."/>
            <person name="Nakayama Y."/>
            <person name="Yasui M."/>
            <person name="Maeda M."/>
            <person name="Furuishi K."/>
            <person name="Unemoto T."/>
        </authorList>
    </citation>
    <scope>COFACTOR</scope>
    <scope>PROSTHETIC GROUP AT THR-236</scope>
    <scope>IDENTIFICATION BY MASS SPECTROMETRY</scope>
</reference>
<reference key="7">
    <citation type="journal article" date="2001" name="Biochim. Biophys. Acta">
        <title>Recent progress in the Na(+)-translocating NADH-quinone reductase from the marine Vibrio alginolyticus.</title>
        <authorList>
            <person name="Hayashi M."/>
            <person name="Nakayama Y."/>
            <person name="Unemoto T."/>
        </authorList>
    </citation>
    <scope>REVIEW</scope>
</reference>
<reference key="8">
    <citation type="journal article" date="2001" name="Biochim. Biophys. Acta">
        <title>Na(+) translocation by bacterial NADH:quinone oxidoreductases: an extension to the complex-I family of primary redox pumps.</title>
        <authorList>
            <person name="Steuber J."/>
        </authorList>
    </citation>
    <scope>REVIEW</scope>
</reference>